<gene>
    <name evidence="1" type="primary">top6B</name>
    <name type="ordered locus">NP_3482A</name>
</gene>
<accession>Q3IPW6</accession>
<proteinExistence type="inferred from homology"/>
<comment type="function">
    <text evidence="1">Relaxes both positive and negative superturns and exhibits a strong decatenase activity.</text>
</comment>
<comment type="catalytic activity">
    <reaction evidence="1">
        <text>ATP-dependent breakage, passage and rejoining of double-stranded DNA.</text>
        <dbReference type="EC" id="5.6.2.2"/>
    </reaction>
</comment>
<comment type="subunit">
    <text evidence="1">Homodimer. Heterotetramer of two Top6A and two Top6B chains.</text>
</comment>
<comment type="similarity">
    <text evidence="1">Belongs to the TOP6B family.</text>
</comment>
<reference key="1">
    <citation type="journal article" date="2005" name="Genome Res.">
        <title>Living with two extremes: conclusions from the genome sequence of Natronomonas pharaonis.</title>
        <authorList>
            <person name="Falb M."/>
            <person name="Pfeiffer F."/>
            <person name="Palm P."/>
            <person name="Rodewald K."/>
            <person name="Hickmann V."/>
            <person name="Tittor J."/>
            <person name="Oesterhelt D."/>
        </authorList>
    </citation>
    <scope>NUCLEOTIDE SEQUENCE [LARGE SCALE GENOMIC DNA]</scope>
    <source>
        <strain>ATCC 35678 / DSM 2160 / CIP 103997 / JCM 8858 / NBRC 14720 / NCIMB 2260 / Gabara</strain>
    </source>
</reference>
<protein>
    <recommendedName>
        <fullName evidence="1">Type 2 DNA topoisomerase 6 subunit B</fullName>
        <ecNumber evidence="1">5.6.2.2</ecNumber>
    </recommendedName>
    <alternativeName>
        <fullName evidence="1">Type II DNA topoisomerase VI subunit B</fullName>
        <shortName evidence="1">TopoVI-B</shortName>
    </alternativeName>
</protein>
<name>TOP6B_NATPD</name>
<keyword id="KW-0067">ATP-binding</keyword>
<keyword id="KW-0238">DNA-binding</keyword>
<keyword id="KW-0413">Isomerase</keyword>
<keyword id="KW-0547">Nucleotide-binding</keyword>
<keyword id="KW-1185">Reference proteome</keyword>
<keyword id="KW-0799">Topoisomerase</keyword>
<feature type="chain" id="PRO_1000005872" description="Type 2 DNA topoisomerase 6 subunit B">
    <location>
        <begin position="1"/>
        <end position="798"/>
    </location>
</feature>
<feature type="region of interest" description="Disordered" evidence="2">
    <location>
        <begin position="221"/>
        <end position="245"/>
    </location>
</feature>
<feature type="compositionally biased region" description="Basic and acidic residues" evidence="2">
    <location>
        <begin position="221"/>
        <end position="233"/>
    </location>
</feature>
<feature type="binding site" evidence="1">
    <location>
        <position position="60"/>
    </location>
    <ligand>
        <name>ATP</name>
        <dbReference type="ChEBI" id="CHEBI:30616"/>
    </ligand>
</feature>
<feature type="binding site" evidence="1">
    <location>
        <position position="91"/>
    </location>
    <ligand>
        <name>ATP</name>
        <dbReference type="ChEBI" id="CHEBI:30616"/>
    </ligand>
</feature>
<feature type="binding site" evidence="1">
    <location>
        <begin position="112"/>
        <end position="113"/>
    </location>
    <ligand>
        <name>ATP</name>
        <dbReference type="ChEBI" id="CHEBI:30616"/>
    </ligand>
</feature>
<feature type="binding site" evidence="1">
    <location>
        <begin position="122"/>
        <end position="129"/>
    </location>
    <ligand>
        <name>ATP</name>
        <dbReference type="ChEBI" id="CHEBI:30616"/>
    </ligand>
</feature>
<feature type="binding site" evidence="1">
    <location>
        <position position="629"/>
    </location>
    <ligand>
        <name>ATP</name>
        <dbReference type="ChEBI" id="CHEBI:30616"/>
    </ligand>
</feature>
<sequence length="798" mass="87363">MTSYQSQLGDGGGGEPIAEELAESQQSISIAEFFEKNKQMLGFDSDAKALVTAVKEAVDNALDAAEEAGILPDIYVEIEDRGDYYRLTVEDNGPGITKEQIPKVFGKLLYGSRFHAREQTRGQQGIGISAAVLYSQLTSGKPAKITSKTDSHSSAQYFELTIDTDTNEPEIDHEREATWERPHGTRIELEMEGNMRARKQLHDYIKYTAVVNPHARVEFHEPEDSFKSERATEELPPETEEIRPHPHGVELGTLLKMLDATDSYSLSGFLQAEFTRVGNKTADGVIDSFRDRHFGREMAWSPPQPHEDVDIETAVSDAVANKSAEATAAFARAVADEVTDMAALSHAELSAVVASVADDIEAEHDETFGETVRENAVEAAWKSVTDDVSADCYALVDGATTTRKDDAAVEGLSRRLAEKFTDQEDARNRFRRSTLREFVDRAADATEEYDDATFGETARENVVEAVWERAVTVPDEPPTVTEVADNRDAAARLLEAMRSTDILSPPTDCLAPISEDLVKAGLKKEYDAEFYTSVTRDASVHGGDPFVVEVGIAHGGDIAVDGSVETLRFANRVPLVYQRGACATVDVLKGVNWRNYGLDQPGGSGMPSGPAVIMVHVASTSVPFTSESKDAVANIPEIEDELRLALQQAGRDLQSHLKKQRSLEKRRRKQDVIADILPDMAAKLSEVTDREPLDVEDSLARIMNNVLVERTVEESTVQLSVHNYGDTNVGPEVTDIVSQEPDGAESATVVEMDGEWFLKWSPTVGGGETATLEYEVDGDAEFDISVEGIEAEKLTVDA</sequence>
<evidence type="ECO:0000255" key="1">
    <source>
        <dbReference type="HAMAP-Rule" id="MF_00322"/>
    </source>
</evidence>
<evidence type="ECO:0000256" key="2">
    <source>
        <dbReference type="SAM" id="MobiDB-lite"/>
    </source>
</evidence>
<dbReference type="EC" id="5.6.2.2" evidence="1"/>
<dbReference type="EMBL" id="CR936257">
    <property type="protein sequence ID" value="CAI49832.1"/>
    <property type="molecule type" value="Genomic_DNA"/>
</dbReference>
<dbReference type="RefSeq" id="WP_011323452.1">
    <property type="nucleotide sequence ID" value="NC_007426.1"/>
</dbReference>
<dbReference type="SMR" id="Q3IPW6"/>
<dbReference type="STRING" id="348780.NP_3482A"/>
<dbReference type="EnsemblBacteria" id="CAI49832">
    <property type="protein sequence ID" value="CAI49832"/>
    <property type="gene ID" value="NP_3482A"/>
</dbReference>
<dbReference type="GeneID" id="3703276"/>
<dbReference type="KEGG" id="nph:NP_3482A"/>
<dbReference type="eggNOG" id="arCOG01165">
    <property type="taxonomic scope" value="Archaea"/>
</dbReference>
<dbReference type="HOGENOM" id="CLU_006403_0_0_2"/>
<dbReference type="OrthoDB" id="65493at2157"/>
<dbReference type="Proteomes" id="UP000002698">
    <property type="component" value="Chromosome"/>
</dbReference>
<dbReference type="GO" id="GO:0005524">
    <property type="term" value="F:ATP binding"/>
    <property type="evidence" value="ECO:0007669"/>
    <property type="project" value="UniProtKB-UniRule"/>
</dbReference>
<dbReference type="GO" id="GO:0003677">
    <property type="term" value="F:DNA binding"/>
    <property type="evidence" value="ECO:0007669"/>
    <property type="project" value="UniProtKB-UniRule"/>
</dbReference>
<dbReference type="GO" id="GO:0003918">
    <property type="term" value="F:DNA topoisomerase type II (double strand cut, ATP-hydrolyzing) activity"/>
    <property type="evidence" value="ECO:0007669"/>
    <property type="project" value="UniProtKB-UniRule"/>
</dbReference>
<dbReference type="GO" id="GO:0006265">
    <property type="term" value="P:DNA topological change"/>
    <property type="evidence" value="ECO:0007669"/>
    <property type="project" value="UniProtKB-UniRule"/>
</dbReference>
<dbReference type="CDD" id="cd16933">
    <property type="entry name" value="HATPase_TopVIB-like"/>
    <property type="match status" value="1"/>
</dbReference>
<dbReference type="CDD" id="cd00823">
    <property type="entry name" value="TopoIIB_Trans"/>
    <property type="match status" value="1"/>
</dbReference>
<dbReference type="FunFam" id="3.30.565.10:FF:000062">
    <property type="entry name" value="Type 2 DNA topoisomerase 6 subunit B"/>
    <property type="match status" value="1"/>
</dbReference>
<dbReference type="Gene3D" id="1.10.8.50">
    <property type="match status" value="1"/>
</dbReference>
<dbReference type="Gene3D" id="2.60.40.2960">
    <property type="match status" value="1"/>
</dbReference>
<dbReference type="Gene3D" id="3.30.230.10">
    <property type="match status" value="1"/>
</dbReference>
<dbReference type="Gene3D" id="6.10.20.80">
    <property type="match status" value="1"/>
</dbReference>
<dbReference type="Gene3D" id="3.30.565.10">
    <property type="entry name" value="Histidine kinase-like ATPase, C-terminal domain"/>
    <property type="match status" value="1"/>
</dbReference>
<dbReference type="HAMAP" id="MF_00322">
    <property type="entry name" value="Top6B"/>
    <property type="match status" value="1"/>
</dbReference>
<dbReference type="InterPro" id="IPR036890">
    <property type="entry name" value="HATPase_C_sf"/>
</dbReference>
<dbReference type="InterPro" id="IPR020568">
    <property type="entry name" value="Ribosomal_Su5_D2-typ_SF"/>
</dbReference>
<dbReference type="InterPro" id="IPR014721">
    <property type="entry name" value="Ribsml_uS5_D2-typ_fold_subgr"/>
</dbReference>
<dbReference type="InterPro" id="IPR040494">
    <property type="entry name" value="Top6b_C"/>
</dbReference>
<dbReference type="InterPro" id="IPR005734">
    <property type="entry name" value="TopoVI_B"/>
</dbReference>
<dbReference type="InterPro" id="IPR015320">
    <property type="entry name" value="TopoVI_B_transducer"/>
</dbReference>
<dbReference type="NCBIfam" id="NF003218">
    <property type="entry name" value="PRK04184.1"/>
    <property type="match status" value="1"/>
</dbReference>
<dbReference type="NCBIfam" id="NF011439">
    <property type="entry name" value="PRK14868.1"/>
    <property type="match status" value="1"/>
</dbReference>
<dbReference type="NCBIfam" id="TIGR01052">
    <property type="entry name" value="top6b"/>
    <property type="match status" value="1"/>
</dbReference>
<dbReference type="PANTHER" id="PTHR48444">
    <property type="entry name" value="DNA TOPOISOMERASE 6 SUBUNIT B"/>
    <property type="match status" value="1"/>
</dbReference>
<dbReference type="PANTHER" id="PTHR48444:SF1">
    <property type="entry name" value="DNA TOPOISOMERASE 6 SUBUNIT B"/>
    <property type="match status" value="1"/>
</dbReference>
<dbReference type="Pfam" id="PF02518">
    <property type="entry name" value="HATPase_c"/>
    <property type="match status" value="1"/>
</dbReference>
<dbReference type="Pfam" id="PF18000">
    <property type="entry name" value="Top6b_C"/>
    <property type="match status" value="1"/>
</dbReference>
<dbReference type="Pfam" id="PF09239">
    <property type="entry name" value="Topo-VIb_trans"/>
    <property type="match status" value="1"/>
</dbReference>
<dbReference type="SMART" id="SM00387">
    <property type="entry name" value="HATPase_c"/>
    <property type="match status" value="1"/>
</dbReference>
<dbReference type="SUPFAM" id="SSF55874">
    <property type="entry name" value="ATPase domain of HSP90 chaperone/DNA topoisomerase II/histidine kinase"/>
    <property type="match status" value="1"/>
</dbReference>
<dbReference type="SUPFAM" id="SSF54211">
    <property type="entry name" value="Ribosomal protein S5 domain 2-like"/>
    <property type="match status" value="1"/>
</dbReference>
<organism>
    <name type="scientific">Natronomonas pharaonis (strain ATCC 35678 / DSM 2160 / CIP 103997 / JCM 8858 / NBRC 14720 / NCIMB 2260 / Gabara)</name>
    <name type="common">Halobacterium pharaonis</name>
    <dbReference type="NCBI Taxonomy" id="348780"/>
    <lineage>
        <taxon>Archaea</taxon>
        <taxon>Methanobacteriati</taxon>
        <taxon>Methanobacteriota</taxon>
        <taxon>Stenosarchaea group</taxon>
        <taxon>Halobacteria</taxon>
        <taxon>Halobacteriales</taxon>
        <taxon>Haloarculaceae</taxon>
        <taxon>Natronomonas</taxon>
    </lineage>
</organism>